<feature type="chain" id="PRO_0000164578" description="D-aminoacyl-tRNA deacylase">
    <location>
        <begin position="1"/>
        <end position="145"/>
    </location>
</feature>
<feature type="short sequence motif" description="Gly-cisPro motif, important for rejection of L-amino acids" evidence="1">
    <location>
        <begin position="137"/>
        <end position="138"/>
    </location>
</feature>
<sequence>MKIVLQRSQHASVSVDGKIVGQIERGLVALIGIGHEDTEATASALADKTAGLRIFSDDNGKMERNVIDAGGDVLAISQFTLLADCRKGRRPAFTDAAPPDRANELYEHYVSELRKTGLSVPCGIFAADMAVSLTNDGPVTIILEL</sequence>
<proteinExistence type="inferred from homology"/>
<accession>Q7UFW2</accession>
<keyword id="KW-0963">Cytoplasm</keyword>
<keyword id="KW-0378">Hydrolase</keyword>
<keyword id="KW-1185">Reference proteome</keyword>
<keyword id="KW-0694">RNA-binding</keyword>
<keyword id="KW-0820">tRNA-binding</keyword>
<organism>
    <name type="scientific">Rhodopirellula baltica (strain DSM 10527 / NCIMB 13988 / SH1)</name>
    <dbReference type="NCBI Taxonomy" id="243090"/>
    <lineage>
        <taxon>Bacteria</taxon>
        <taxon>Pseudomonadati</taxon>
        <taxon>Planctomycetota</taxon>
        <taxon>Planctomycetia</taxon>
        <taxon>Pirellulales</taxon>
        <taxon>Pirellulaceae</taxon>
        <taxon>Rhodopirellula</taxon>
    </lineage>
</organism>
<evidence type="ECO:0000255" key="1">
    <source>
        <dbReference type="HAMAP-Rule" id="MF_00518"/>
    </source>
</evidence>
<evidence type="ECO:0000305" key="2"/>
<comment type="function">
    <text evidence="1">An aminoacyl-tRNA editing enzyme that deacylates mischarged D-aminoacyl-tRNAs. Also deacylates mischarged glycyl-tRNA(Ala), protecting cells against glycine mischarging by AlaRS. Acts via tRNA-based rather than protein-based catalysis; rejects L-amino acids rather than detecting D-amino acids in the active site. By recycling D-aminoacyl-tRNA to D-amino acids and free tRNA molecules, this enzyme counteracts the toxicity associated with the formation of D-aminoacyl-tRNA entities in vivo and helps enforce protein L-homochirality.</text>
</comment>
<comment type="catalytic activity">
    <reaction evidence="1">
        <text>glycyl-tRNA(Ala) + H2O = tRNA(Ala) + glycine + H(+)</text>
        <dbReference type="Rhea" id="RHEA:53744"/>
        <dbReference type="Rhea" id="RHEA-COMP:9657"/>
        <dbReference type="Rhea" id="RHEA-COMP:13640"/>
        <dbReference type="ChEBI" id="CHEBI:15377"/>
        <dbReference type="ChEBI" id="CHEBI:15378"/>
        <dbReference type="ChEBI" id="CHEBI:57305"/>
        <dbReference type="ChEBI" id="CHEBI:78442"/>
        <dbReference type="ChEBI" id="CHEBI:78522"/>
        <dbReference type="EC" id="3.1.1.96"/>
    </reaction>
</comment>
<comment type="catalytic activity">
    <reaction evidence="1">
        <text>a D-aminoacyl-tRNA + H2O = a tRNA + a D-alpha-amino acid + H(+)</text>
        <dbReference type="Rhea" id="RHEA:13953"/>
        <dbReference type="Rhea" id="RHEA-COMP:10123"/>
        <dbReference type="Rhea" id="RHEA-COMP:10124"/>
        <dbReference type="ChEBI" id="CHEBI:15377"/>
        <dbReference type="ChEBI" id="CHEBI:15378"/>
        <dbReference type="ChEBI" id="CHEBI:59871"/>
        <dbReference type="ChEBI" id="CHEBI:78442"/>
        <dbReference type="ChEBI" id="CHEBI:79333"/>
        <dbReference type="EC" id="3.1.1.96"/>
    </reaction>
</comment>
<comment type="subunit">
    <text evidence="1">Homodimer.</text>
</comment>
<comment type="subcellular location">
    <subcellularLocation>
        <location evidence="1">Cytoplasm</location>
    </subcellularLocation>
</comment>
<comment type="domain">
    <text evidence="1">A Gly-cisPro motif from one monomer fits into the active site of the other monomer to allow specific chiral rejection of L-amino acids.</text>
</comment>
<comment type="similarity">
    <text evidence="1">Belongs to the DTD family.</text>
</comment>
<comment type="sequence caution" evidence="2">
    <conflict type="erroneous initiation">
        <sequence resource="EMBL-CDS" id="CAD78567"/>
    </conflict>
    <text>Extended N-terminus.</text>
</comment>
<name>DTD_RHOBA</name>
<dbReference type="EC" id="3.1.1.96" evidence="1"/>
<dbReference type="EMBL" id="BX294147">
    <property type="protein sequence ID" value="CAD78567.1"/>
    <property type="status" value="ALT_INIT"/>
    <property type="molecule type" value="Genomic_DNA"/>
</dbReference>
<dbReference type="RefSeq" id="NP_868289.1">
    <property type="nucleotide sequence ID" value="NC_005027.1"/>
</dbReference>
<dbReference type="RefSeq" id="WP_164922140.1">
    <property type="nucleotide sequence ID" value="NC_005027.1"/>
</dbReference>
<dbReference type="SMR" id="Q7UFW2"/>
<dbReference type="FunCoup" id="Q7UFW2">
    <property type="interactions" value="437"/>
</dbReference>
<dbReference type="STRING" id="243090.RB8300"/>
<dbReference type="EnsemblBacteria" id="CAD78567">
    <property type="protein sequence ID" value="CAD78567"/>
    <property type="gene ID" value="RB8300"/>
</dbReference>
<dbReference type="KEGG" id="rba:RB8300"/>
<dbReference type="PATRIC" id="fig|243090.15.peg.4000"/>
<dbReference type="eggNOG" id="COG1490">
    <property type="taxonomic scope" value="Bacteria"/>
</dbReference>
<dbReference type="HOGENOM" id="CLU_076901_1_1_0"/>
<dbReference type="InParanoid" id="Q7UFW2"/>
<dbReference type="OrthoDB" id="9801395at2"/>
<dbReference type="Proteomes" id="UP000001025">
    <property type="component" value="Chromosome"/>
</dbReference>
<dbReference type="GO" id="GO:0005737">
    <property type="term" value="C:cytoplasm"/>
    <property type="evidence" value="ECO:0000318"/>
    <property type="project" value="GO_Central"/>
</dbReference>
<dbReference type="GO" id="GO:0051500">
    <property type="term" value="F:D-tyrosyl-tRNA(Tyr) deacylase activity"/>
    <property type="evidence" value="ECO:0000318"/>
    <property type="project" value="GO_Central"/>
</dbReference>
<dbReference type="GO" id="GO:0106026">
    <property type="term" value="F:Gly-tRNA(Ala) deacylase activity"/>
    <property type="evidence" value="ECO:0007669"/>
    <property type="project" value="UniProtKB-UniRule"/>
</dbReference>
<dbReference type="GO" id="GO:0043908">
    <property type="term" value="F:Ser(Gly)-tRNA(Ala) hydrolase activity"/>
    <property type="evidence" value="ECO:0007669"/>
    <property type="project" value="UniProtKB-UniRule"/>
</dbReference>
<dbReference type="GO" id="GO:0000049">
    <property type="term" value="F:tRNA binding"/>
    <property type="evidence" value="ECO:0007669"/>
    <property type="project" value="UniProtKB-UniRule"/>
</dbReference>
<dbReference type="GO" id="GO:0019478">
    <property type="term" value="P:D-amino acid catabolic process"/>
    <property type="evidence" value="ECO:0007669"/>
    <property type="project" value="UniProtKB-UniRule"/>
</dbReference>
<dbReference type="GO" id="GO:0006399">
    <property type="term" value="P:tRNA metabolic process"/>
    <property type="evidence" value="ECO:0000318"/>
    <property type="project" value="GO_Central"/>
</dbReference>
<dbReference type="CDD" id="cd00563">
    <property type="entry name" value="Dtyr_deacylase"/>
    <property type="match status" value="1"/>
</dbReference>
<dbReference type="FunFam" id="3.50.80.10:FF:000001">
    <property type="entry name" value="D-aminoacyl-tRNA deacylase"/>
    <property type="match status" value="1"/>
</dbReference>
<dbReference type="Gene3D" id="3.50.80.10">
    <property type="entry name" value="D-tyrosyl-tRNA(Tyr) deacylase"/>
    <property type="match status" value="1"/>
</dbReference>
<dbReference type="HAMAP" id="MF_00518">
    <property type="entry name" value="Deacylase_Dtd"/>
    <property type="match status" value="1"/>
</dbReference>
<dbReference type="InterPro" id="IPR003732">
    <property type="entry name" value="Daa-tRNA_deacyls_DTD"/>
</dbReference>
<dbReference type="InterPro" id="IPR023509">
    <property type="entry name" value="DTD-like_sf"/>
</dbReference>
<dbReference type="NCBIfam" id="TIGR00256">
    <property type="entry name" value="D-aminoacyl-tRNA deacylase"/>
    <property type="match status" value="1"/>
</dbReference>
<dbReference type="PANTHER" id="PTHR10472:SF5">
    <property type="entry name" value="D-AMINOACYL-TRNA DEACYLASE 1"/>
    <property type="match status" value="1"/>
</dbReference>
<dbReference type="PANTHER" id="PTHR10472">
    <property type="entry name" value="D-TYROSYL-TRNA TYR DEACYLASE"/>
    <property type="match status" value="1"/>
</dbReference>
<dbReference type="Pfam" id="PF02580">
    <property type="entry name" value="Tyr_Deacylase"/>
    <property type="match status" value="1"/>
</dbReference>
<dbReference type="SUPFAM" id="SSF69500">
    <property type="entry name" value="DTD-like"/>
    <property type="match status" value="1"/>
</dbReference>
<protein>
    <recommendedName>
        <fullName evidence="1">D-aminoacyl-tRNA deacylase</fullName>
        <shortName evidence="1">DTD</shortName>
        <ecNumber evidence="1">3.1.1.96</ecNumber>
    </recommendedName>
    <alternativeName>
        <fullName evidence="1">Gly-tRNA(Ala) deacylase</fullName>
    </alternativeName>
</protein>
<gene>
    <name evidence="1" type="primary">dtd</name>
    <name type="ordered locus">RB8300</name>
</gene>
<reference key="1">
    <citation type="journal article" date="2003" name="Proc. Natl. Acad. Sci. U.S.A.">
        <title>Complete genome sequence of the marine planctomycete Pirellula sp. strain 1.</title>
        <authorList>
            <person name="Gloeckner F.O."/>
            <person name="Kube M."/>
            <person name="Bauer M."/>
            <person name="Teeling H."/>
            <person name="Lombardot T."/>
            <person name="Ludwig W."/>
            <person name="Gade D."/>
            <person name="Beck A."/>
            <person name="Borzym K."/>
            <person name="Heitmann K."/>
            <person name="Rabus R."/>
            <person name="Schlesner H."/>
            <person name="Amann R."/>
            <person name="Reinhardt R."/>
        </authorList>
    </citation>
    <scope>NUCLEOTIDE SEQUENCE [LARGE SCALE GENOMIC DNA]</scope>
    <source>
        <strain>DSM 10527 / NCIMB 13988 / SH1</strain>
    </source>
</reference>